<gene>
    <name evidence="1" type="primary">fdhD</name>
    <name type="synonym">fdsC</name>
    <name type="ordered locus">XCC2355</name>
</gene>
<reference key="1">
    <citation type="journal article" date="2002" name="Nature">
        <title>Comparison of the genomes of two Xanthomonas pathogens with differing host specificities.</title>
        <authorList>
            <person name="da Silva A.C.R."/>
            <person name="Ferro J.A."/>
            <person name="Reinach F.C."/>
            <person name="Farah C.S."/>
            <person name="Furlan L.R."/>
            <person name="Quaggio R.B."/>
            <person name="Monteiro-Vitorello C.B."/>
            <person name="Van Sluys M.A."/>
            <person name="Almeida N.F. Jr."/>
            <person name="Alves L.M.C."/>
            <person name="do Amaral A.M."/>
            <person name="Bertolini M.C."/>
            <person name="Camargo L.E.A."/>
            <person name="Camarotte G."/>
            <person name="Cannavan F."/>
            <person name="Cardozo J."/>
            <person name="Chambergo F."/>
            <person name="Ciapina L.P."/>
            <person name="Cicarelli R.M.B."/>
            <person name="Coutinho L.L."/>
            <person name="Cursino-Santos J.R."/>
            <person name="El-Dorry H."/>
            <person name="Faria J.B."/>
            <person name="Ferreira A.J.S."/>
            <person name="Ferreira R.C.C."/>
            <person name="Ferro M.I.T."/>
            <person name="Formighieri E.F."/>
            <person name="Franco M.C."/>
            <person name="Greggio C.C."/>
            <person name="Gruber A."/>
            <person name="Katsuyama A.M."/>
            <person name="Kishi L.T."/>
            <person name="Leite R.P."/>
            <person name="Lemos E.G.M."/>
            <person name="Lemos M.V.F."/>
            <person name="Locali E.C."/>
            <person name="Machado M.A."/>
            <person name="Madeira A.M.B.N."/>
            <person name="Martinez-Rossi N.M."/>
            <person name="Martins E.C."/>
            <person name="Meidanis J."/>
            <person name="Menck C.F.M."/>
            <person name="Miyaki C.Y."/>
            <person name="Moon D.H."/>
            <person name="Moreira L.M."/>
            <person name="Novo M.T.M."/>
            <person name="Okura V.K."/>
            <person name="Oliveira M.C."/>
            <person name="Oliveira V.R."/>
            <person name="Pereira H.A."/>
            <person name="Rossi A."/>
            <person name="Sena J.A.D."/>
            <person name="Silva C."/>
            <person name="de Souza R.F."/>
            <person name="Spinola L.A.F."/>
            <person name="Takita M.A."/>
            <person name="Tamura R.E."/>
            <person name="Teixeira E.C."/>
            <person name="Tezza R.I.D."/>
            <person name="Trindade dos Santos M."/>
            <person name="Truffi D."/>
            <person name="Tsai S.M."/>
            <person name="White F.F."/>
            <person name="Setubal J.C."/>
            <person name="Kitajima J.P."/>
        </authorList>
    </citation>
    <scope>NUCLEOTIDE SEQUENCE [LARGE SCALE GENOMIC DNA]</scope>
    <source>
        <strain>ATCC 33913 / DSM 3586 / NCPPB 528 / LMG 568 / P 25</strain>
    </source>
</reference>
<accession>Q8P888</accession>
<feature type="chain" id="PRO_0000152932" description="Sulfur carrier protein FdhD">
    <location>
        <begin position="1"/>
        <end position="281"/>
    </location>
</feature>
<feature type="active site" description="Cysteine persulfide intermediate" evidence="1">
    <location>
        <position position="117"/>
    </location>
</feature>
<comment type="function">
    <text evidence="1">Required for formate dehydrogenase (FDH) activity. Acts as a sulfur carrier protein that transfers sulfur from IscS to the molybdenum cofactor prior to its insertion into FDH.</text>
</comment>
<comment type="subcellular location">
    <subcellularLocation>
        <location evidence="1">Cytoplasm</location>
    </subcellularLocation>
</comment>
<comment type="similarity">
    <text evidence="1">Belongs to the FdhD family.</text>
</comment>
<sequence>MTGQPSTPVRPGSVVRTVRRHRGGRSATVQDMVAAEMPVAFNYNGVPFAVMMATPEDLEDFALGFSLSEGIVDHPQDLRVVAVDTFLEGASLQIEIPPERAAALDQRRRNLDGRSGCGVCGNESIEAVLRVPPVLQSALRIDVDALARALDALHARQPIAAQTGAVHAAGWADAQGMVQLVREDVGRHNALDKLIGALARARVDATQGFAVVTSRASYEMAMKAAQARIPLLAAISAPTALAISLADSAGLTLIGFARDHDCVVYSHPQRLDLGVAVGEPA</sequence>
<evidence type="ECO:0000255" key="1">
    <source>
        <dbReference type="HAMAP-Rule" id="MF_00187"/>
    </source>
</evidence>
<proteinExistence type="inferred from homology"/>
<name>FDHD_XANCP</name>
<protein>
    <recommendedName>
        <fullName evidence="1">Sulfur carrier protein FdhD</fullName>
    </recommendedName>
</protein>
<dbReference type="EMBL" id="AE008922">
    <property type="protein sequence ID" value="AAM41633.1"/>
    <property type="molecule type" value="Genomic_DNA"/>
</dbReference>
<dbReference type="RefSeq" id="NP_637709.1">
    <property type="nucleotide sequence ID" value="NC_003902.1"/>
</dbReference>
<dbReference type="RefSeq" id="WP_011037498.1">
    <property type="nucleotide sequence ID" value="NC_003902.1"/>
</dbReference>
<dbReference type="SMR" id="Q8P888"/>
<dbReference type="STRING" id="190485.XCC2355"/>
<dbReference type="EnsemblBacteria" id="AAM41633">
    <property type="protein sequence ID" value="AAM41633"/>
    <property type="gene ID" value="XCC2355"/>
</dbReference>
<dbReference type="GeneID" id="58013066"/>
<dbReference type="KEGG" id="xcc:XCC2355"/>
<dbReference type="PATRIC" id="fig|190485.4.peg.2508"/>
<dbReference type="eggNOG" id="COG1526">
    <property type="taxonomic scope" value="Bacteria"/>
</dbReference>
<dbReference type="HOGENOM" id="CLU_056887_2_0_6"/>
<dbReference type="OrthoDB" id="3197277at2"/>
<dbReference type="Proteomes" id="UP000001010">
    <property type="component" value="Chromosome"/>
</dbReference>
<dbReference type="GO" id="GO:0005737">
    <property type="term" value="C:cytoplasm"/>
    <property type="evidence" value="ECO:0007669"/>
    <property type="project" value="UniProtKB-SubCell"/>
</dbReference>
<dbReference type="GO" id="GO:0097163">
    <property type="term" value="F:sulfur carrier activity"/>
    <property type="evidence" value="ECO:0007669"/>
    <property type="project" value="UniProtKB-UniRule"/>
</dbReference>
<dbReference type="GO" id="GO:0016783">
    <property type="term" value="F:sulfurtransferase activity"/>
    <property type="evidence" value="ECO:0007669"/>
    <property type="project" value="InterPro"/>
</dbReference>
<dbReference type="GO" id="GO:0006777">
    <property type="term" value="P:Mo-molybdopterin cofactor biosynthetic process"/>
    <property type="evidence" value="ECO:0007669"/>
    <property type="project" value="UniProtKB-UniRule"/>
</dbReference>
<dbReference type="Gene3D" id="3.10.20.10">
    <property type="match status" value="1"/>
</dbReference>
<dbReference type="Gene3D" id="3.40.140.10">
    <property type="entry name" value="Cytidine Deaminase, domain 2"/>
    <property type="match status" value="1"/>
</dbReference>
<dbReference type="HAMAP" id="MF_00187">
    <property type="entry name" value="FdhD"/>
    <property type="match status" value="1"/>
</dbReference>
<dbReference type="InterPro" id="IPR016193">
    <property type="entry name" value="Cytidine_deaminase-like"/>
</dbReference>
<dbReference type="InterPro" id="IPR003786">
    <property type="entry name" value="FdhD"/>
</dbReference>
<dbReference type="NCBIfam" id="TIGR00129">
    <property type="entry name" value="fdhD_narQ"/>
    <property type="match status" value="1"/>
</dbReference>
<dbReference type="PANTHER" id="PTHR30592">
    <property type="entry name" value="FORMATE DEHYDROGENASE"/>
    <property type="match status" value="1"/>
</dbReference>
<dbReference type="PANTHER" id="PTHR30592:SF1">
    <property type="entry name" value="SULFUR CARRIER PROTEIN FDHD"/>
    <property type="match status" value="1"/>
</dbReference>
<dbReference type="Pfam" id="PF02634">
    <property type="entry name" value="FdhD-NarQ"/>
    <property type="match status" value="1"/>
</dbReference>
<dbReference type="PIRSF" id="PIRSF015626">
    <property type="entry name" value="FdhD"/>
    <property type="match status" value="1"/>
</dbReference>
<dbReference type="SUPFAM" id="SSF53927">
    <property type="entry name" value="Cytidine deaminase-like"/>
    <property type="match status" value="1"/>
</dbReference>
<organism>
    <name type="scientific">Xanthomonas campestris pv. campestris (strain ATCC 33913 / DSM 3586 / NCPPB 528 / LMG 568 / P 25)</name>
    <dbReference type="NCBI Taxonomy" id="190485"/>
    <lineage>
        <taxon>Bacteria</taxon>
        <taxon>Pseudomonadati</taxon>
        <taxon>Pseudomonadota</taxon>
        <taxon>Gammaproteobacteria</taxon>
        <taxon>Lysobacterales</taxon>
        <taxon>Lysobacteraceae</taxon>
        <taxon>Xanthomonas</taxon>
    </lineage>
</organism>
<keyword id="KW-0963">Cytoplasm</keyword>
<keyword id="KW-0501">Molybdenum cofactor biosynthesis</keyword>
<keyword id="KW-1185">Reference proteome</keyword>